<feature type="chain" id="PRO_1000115796" description="Molybdenum cofactor guanylyltransferase">
    <location>
        <begin position="1"/>
        <end position="199"/>
    </location>
</feature>
<feature type="binding site" evidence="1">
    <location>
        <begin position="12"/>
        <end position="14"/>
    </location>
    <ligand>
        <name>GTP</name>
        <dbReference type="ChEBI" id="CHEBI:37565"/>
    </ligand>
</feature>
<feature type="binding site" evidence="1">
    <location>
        <position position="25"/>
    </location>
    <ligand>
        <name>GTP</name>
        <dbReference type="ChEBI" id="CHEBI:37565"/>
    </ligand>
</feature>
<feature type="binding site" evidence="1">
    <location>
        <position position="53"/>
    </location>
    <ligand>
        <name>GTP</name>
        <dbReference type="ChEBI" id="CHEBI:37565"/>
    </ligand>
</feature>
<feature type="binding site" evidence="1">
    <location>
        <position position="71"/>
    </location>
    <ligand>
        <name>GTP</name>
        <dbReference type="ChEBI" id="CHEBI:37565"/>
    </ligand>
</feature>
<feature type="binding site" evidence="1">
    <location>
        <position position="101"/>
    </location>
    <ligand>
        <name>GTP</name>
        <dbReference type="ChEBI" id="CHEBI:37565"/>
    </ligand>
</feature>
<feature type="binding site" evidence="1">
    <location>
        <position position="101"/>
    </location>
    <ligand>
        <name>Mg(2+)</name>
        <dbReference type="ChEBI" id="CHEBI:18420"/>
    </ligand>
</feature>
<name>MOBA_CUPTR</name>
<dbReference type="EC" id="2.7.7.77" evidence="1"/>
<dbReference type="EMBL" id="CU633749">
    <property type="protein sequence ID" value="CAQ70022.1"/>
    <property type="molecule type" value="Genomic_DNA"/>
</dbReference>
<dbReference type="RefSeq" id="WP_012353329.1">
    <property type="nucleotide sequence ID" value="NC_010528.1"/>
</dbReference>
<dbReference type="SMR" id="B3R5L0"/>
<dbReference type="GeneID" id="29760610"/>
<dbReference type="KEGG" id="cti:RALTA_A2085"/>
<dbReference type="eggNOG" id="COG0746">
    <property type="taxonomic scope" value="Bacteria"/>
</dbReference>
<dbReference type="HOGENOM" id="CLU_055597_5_1_4"/>
<dbReference type="BioCyc" id="CTAI977880:RALTA_RS10115-MONOMER"/>
<dbReference type="Proteomes" id="UP000001692">
    <property type="component" value="Chromosome 1"/>
</dbReference>
<dbReference type="GO" id="GO:0005737">
    <property type="term" value="C:cytoplasm"/>
    <property type="evidence" value="ECO:0007669"/>
    <property type="project" value="UniProtKB-SubCell"/>
</dbReference>
<dbReference type="GO" id="GO:0005525">
    <property type="term" value="F:GTP binding"/>
    <property type="evidence" value="ECO:0007669"/>
    <property type="project" value="UniProtKB-UniRule"/>
</dbReference>
<dbReference type="GO" id="GO:0046872">
    <property type="term" value="F:metal ion binding"/>
    <property type="evidence" value="ECO:0007669"/>
    <property type="project" value="UniProtKB-KW"/>
</dbReference>
<dbReference type="GO" id="GO:0061603">
    <property type="term" value="F:molybdenum cofactor guanylyltransferase activity"/>
    <property type="evidence" value="ECO:0007669"/>
    <property type="project" value="UniProtKB-EC"/>
</dbReference>
<dbReference type="GO" id="GO:1902758">
    <property type="term" value="P:bis(molybdopterin guanine dinucleotide)molybdenum biosynthetic process"/>
    <property type="evidence" value="ECO:0007669"/>
    <property type="project" value="TreeGrafter"/>
</dbReference>
<dbReference type="CDD" id="cd02503">
    <property type="entry name" value="MobA"/>
    <property type="match status" value="1"/>
</dbReference>
<dbReference type="Gene3D" id="3.90.550.10">
    <property type="entry name" value="Spore Coat Polysaccharide Biosynthesis Protein SpsA, Chain A"/>
    <property type="match status" value="1"/>
</dbReference>
<dbReference type="HAMAP" id="MF_00316">
    <property type="entry name" value="MobA"/>
    <property type="match status" value="1"/>
</dbReference>
<dbReference type="InterPro" id="IPR025877">
    <property type="entry name" value="MobA-like_NTP_Trfase"/>
</dbReference>
<dbReference type="InterPro" id="IPR013482">
    <property type="entry name" value="Molybde_CF_guanTrfase"/>
</dbReference>
<dbReference type="InterPro" id="IPR029044">
    <property type="entry name" value="Nucleotide-diphossugar_trans"/>
</dbReference>
<dbReference type="NCBIfam" id="TIGR02665">
    <property type="entry name" value="molyb_mobA"/>
    <property type="match status" value="1"/>
</dbReference>
<dbReference type="PANTHER" id="PTHR19136">
    <property type="entry name" value="MOLYBDENUM COFACTOR GUANYLYLTRANSFERASE"/>
    <property type="match status" value="1"/>
</dbReference>
<dbReference type="PANTHER" id="PTHR19136:SF81">
    <property type="entry name" value="MOLYBDENUM COFACTOR GUANYLYLTRANSFERASE"/>
    <property type="match status" value="1"/>
</dbReference>
<dbReference type="Pfam" id="PF12804">
    <property type="entry name" value="NTP_transf_3"/>
    <property type="match status" value="1"/>
</dbReference>
<dbReference type="SUPFAM" id="SSF53448">
    <property type="entry name" value="Nucleotide-diphospho-sugar transferases"/>
    <property type="match status" value="1"/>
</dbReference>
<accession>B3R5L0</accession>
<keyword id="KW-0963">Cytoplasm</keyword>
<keyword id="KW-0342">GTP-binding</keyword>
<keyword id="KW-0460">Magnesium</keyword>
<keyword id="KW-0479">Metal-binding</keyword>
<keyword id="KW-0501">Molybdenum cofactor biosynthesis</keyword>
<keyword id="KW-0547">Nucleotide-binding</keyword>
<keyword id="KW-0808">Transferase</keyword>
<sequence length="199" mass="21090">MIARDDVTGLILAGGRGSRMGGTDKGLQPLHGTPMAMHTMMRLTPQVGGLMINANRNLAAYESFGVPVYTDSVPDFAGPLAGMLAGLEQCATPWMVTAPCDSPFLPTDLVARLAQAIEAEGAELAIPVTLDPDGRRQTQPVFCLMPVSALDSLVAYLSGGGRKIETWAASHRLAEVLFDDAAAFANINTLDELRAHEAR</sequence>
<reference key="1">
    <citation type="journal article" date="2008" name="Genome Res.">
        <title>Genome sequence of the beta-rhizobium Cupriavidus taiwanensis and comparative genomics of rhizobia.</title>
        <authorList>
            <person name="Amadou C."/>
            <person name="Pascal G."/>
            <person name="Mangenot S."/>
            <person name="Glew M."/>
            <person name="Bontemps C."/>
            <person name="Capela D."/>
            <person name="Carrere S."/>
            <person name="Cruveiller S."/>
            <person name="Dossat C."/>
            <person name="Lajus A."/>
            <person name="Marchetti M."/>
            <person name="Poinsot V."/>
            <person name="Rouy Z."/>
            <person name="Servin B."/>
            <person name="Saad M."/>
            <person name="Schenowitz C."/>
            <person name="Barbe V."/>
            <person name="Batut J."/>
            <person name="Medigue C."/>
            <person name="Masson-Boivin C."/>
        </authorList>
    </citation>
    <scope>NUCLEOTIDE SEQUENCE [LARGE SCALE GENOMIC DNA]</scope>
    <source>
        <strain>DSM 17343 / BCRC 17206 / CCUG 44338 / CIP 107171 / LMG 19424 / R1</strain>
    </source>
</reference>
<gene>
    <name evidence="1" type="primary">mobA</name>
    <name type="ordered locus">RALTA_A2085</name>
</gene>
<proteinExistence type="inferred from homology"/>
<comment type="function">
    <text evidence="1">Transfers a GMP moiety from GTP to Mo-molybdopterin (Mo-MPT) cofactor (Moco or molybdenum cofactor) to form Mo-molybdopterin guanine dinucleotide (Mo-MGD) cofactor.</text>
</comment>
<comment type="catalytic activity">
    <reaction evidence="1">
        <text>Mo-molybdopterin + GTP + H(+) = Mo-molybdopterin guanine dinucleotide + diphosphate</text>
        <dbReference type="Rhea" id="RHEA:34243"/>
        <dbReference type="ChEBI" id="CHEBI:15378"/>
        <dbReference type="ChEBI" id="CHEBI:33019"/>
        <dbReference type="ChEBI" id="CHEBI:37565"/>
        <dbReference type="ChEBI" id="CHEBI:71302"/>
        <dbReference type="ChEBI" id="CHEBI:71310"/>
        <dbReference type="EC" id="2.7.7.77"/>
    </reaction>
</comment>
<comment type="cofactor">
    <cofactor evidence="1">
        <name>Mg(2+)</name>
        <dbReference type="ChEBI" id="CHEBI:18420"/>
    </cofactor>
</comment>
<comment type="subunit">
    <text evidence="1">Monomer.</text>
</comment>
<comment type="subcellular location">
    <subcellularLocation>
        <location evidence="1">Cytoplasm</location>
    </subcellularLocation>
</comment>
<comment type="domain">
    <text evidence="1">The N-terminal domain determines nucleotide recognition and specific binding, while the C-terminal domain determines the specific binding to the target protein.</text>
</comment>
<comment type="similarity">
    <text evidence="1">Belongs to the MobA family.</text>
</comment>
<protein>
    <recommendedName>
        <fullName evidence="1">Molybdenum cofactor guanylyltransferase</fullName>
        <shortName evidence="1">MoCo guanylyltransferase</shortName>
        <ecNumber evidence="1">2.7.7.77</ecNumber>
    </recommendedName>
    <alternativeName>
        <fullName evidence="1">GTP:molybdopterin guanylyltransferase</fullName>
    </alternativeName>
    <alternativeName>
        <fullName evidence="1">Mo-MPT guanylyltransferase</fullName>
    </alternativeName>
    <alternativeName>
        <fullName evidence="1">Molybdopterin guanylyltransferase</fullName>
    </alternativeName>
    <alternativeName>
        <fullName evidence="1">Molybdopterin-guanine dinucleotide synthase</fullName>
        <shortName evidence="1">MGD synthase</shortName>
    </alternativeName>
</protein>
<evidence type="ECO:0000255" key="1">
    <source>
        <dbReference type="HAMAP-Rule" id="MF_00316"/>
    </source>
</evidence>
<organism>
    <name type="scientific">Cupriavidus taiwanensis (strain DSM 17343 / BCRC 17206 / CCUG 44338 / CIP 107171 / LMG 19424 / R1)</name>
    <name type="common">Ralstonia taiwanensis (strain LMG 19424)</name>
    <dbReference type="NCBI Taxonomy" id="977880"/>
    <lineage>
        <taxon>Bacteria</taxon>
        <taxon>Pseudomonadati</taxon>
        <taxon>Pseudomonadota</taxon>
        <taxon>Betaproteobacteria</taxon>
        <taxon>Burkholderiales</taxon>
        <taxon>Burkholderiaceae</taxon>
        <taxon>Cupriavidus</taxon>
    </lineage>
</organism>